<accession>Q93VK9</accession>
<accession>Q8LAK6</accession>
<accession>Q9STR7</accession>
<organism>
    <name type="scientific">Arabidopsis thaliana</name>
    <name type="common">Mouse-ear cress</name>
    <dbReference type="NCBI Taxonomy" id="3702"/>
    <lineage>
        <taxon>Eukaryota</taxon>
        <taxon>Viridiplantae</taxon>
        <taxon>Streptophyta</taxon>
        <taxon>Embryophyta</taxon>
        <taxon>Tracheophyta</taxon>
        <taxon>Spermatophyta</taxon>
        <taxon>Magnoliopsida</taxon>
        <taxon>eudicotyledons</taxon>
        <taxon>Gunneridae</taxon>
        <taxon>Pentapetalae</taxon>
        <taxon>rosids</taxon>
        <taxon>malvids</taxon>
        <taxon>Brassicales</taxon>
        <taxon>Brassicaceae</taxon>
        <taxon>Camelineae</taxon>
        <taxon>Arabidopsis</taxon>
    </lineage>
</organism>
<dbReference type="EMBL" id="AL096856">
    <property type="protein sequence ID" value="CAB51068.1"/>
    <property type="status" value="ALT_SEQ"/>
    <property type="molecule type" value="Genomic_DNA"/>
</dbReference>
<dbReference type="EMBL" id="CP002686">
    <property type="protein sequence ID" value="AEE78385.1"/>
    <property type="molecule type" value="Genomic_DNA"/>
</dbReference>
<dbReference type="EMBL" id="AF370157">
    <property type="protein sequence ID" value="AAK43972.1"/>
    <property type="molecule type" value="mRNA"/>
</dbReference>
<dbReference type="EMBL" id="AY059099">
    <property type="protein sequence ID" value="AAL15205.1"/>
    <property type="molecule type" value="mRNA"/>
</dbReference>
<dbReference type="EMBL" id="AY087754">
    <property type="protein sequence ID" value="AAM65290.1"/>
    <property type="status" value="ALT_INIT"/>
    <property type="molecule type" value="mRNA"/>
</dbReference>
<dbReference type="PIR" id="T13010">
    <property type="entry name" value="T13010"/>
</dbReference>
<dbReference type="RefSeq" id="NP_566900.1">
    <property type="nucleotide sequence ID" value="NM_114691.4"/>
</dbReference>
<dbReference type="SMR" id="Q93VK9"/>
<dbReference type="FunCoup" id="Q93VK9">
    <property type="interactions" value="581"/>
</dbReference>
<dbReference type="IntAct" id="Q93VK9">
    <property type="interactions" value="1"/>
</dbReference>
<dbReference type="STRING" id="3702.Q93VK9"/>
<dbReference type="iPTMnet" id="Q93VK9"/>
<dbReference type="PaxDb" id="3702-AT3G48210.1"/>
<dbReference type="ProteomicsDB" id="228289"/>
<dbReference type="EnsemblPlants" id="AT3G48210.1">
    <property type="protein sequence ID" value="AT3G48210.1"/>
    <property type="gene ID" value="AT3G48210"/>
</dbReference>
<dbReference type="GeneID" id="823978"/>
<dbReference type="Gramene" id="AT3G48210.1">
    <property type="protein sequence ID" value="AT3G48210.1"/>
    <property type="gene ID" value="AT3G48210"/>
</dbReference>
<dbReference type="KEGG" id="ath:AT3G48210"/>
<dbReference type="Araport" id="AT3G48210"/>
<dbReference type="TAIR" id="AT3G48210">
    <property type="gene designation" value="SPC25"/>
</dbReference>
<dbReference type="eggNOG" id="KOG4657">
    <property type="taxonomic scope" value="Eukaryota"/>
</dbReference>
<dbReference type="HOGENOM" id="CLU_069238_0_0_1"/>
<dbReference type="InParanoid" id="Q93VK9"/>
<dbReference type="OMA" id="FRIECGH"/>
<dbReference type="PhylomeDB" id="Q93VK9"/>
<dbReference type="PRO" id="PR:Q93VK9"/>
<dbReference type="Proteomes" id="UP000006548">
    <property type="component" value="Chromosome 3"/>
</dbReference>
<dbReference type="ExpressionAtlas" id="Q93VK9">
    <property type="expression patterns" value="baseline and differential"/>
</dbReference>
<dbReference type="GO" id="GO:0031262">
    <property type="term" value="C:Ndc80 complex"/>
    <property type="evidence" value="ECO:0000250"/>
    <property type="project" value="UniProtKB"/>
</dbReference>
<dbReference type="GO" id="GO:0051301">
    <property type="term" value="P:cell division"/>
    <property type="evidence" value="ECO:0007669"/>
    <property type="project" value="UniProtKB-KW"/>
</dbReference>
<dbReference type="GO" id="GO:0007059">
    <property type="term" value="P:chromosome segregation"/>
    <property type="evidence" value="ECO:0007669"/>
    <property type="project" value="InterPro"/>
</dbReference>
<dbReference type="CDD" id="cd23784">
    <property type="entry name" value="RWD_Spc25"/>
    <property type="match status" value="1"/>
</dbReference>
<dbReference type="FunFam" id="3.30.457.50:FF:000001">
    <property type="entry name" value="Probable kinetochore protein spc25"/>
    <property type="match status" value="1"/>
</dbReference>
<dbReference type="Gene3D" id="3.30.457.50">
    <property type="entry name" value="Chromosome segregation protein Spc25"/>
    <property type="match status" value="1"/>
</dbReference>
<dbReference type="InterPro" id="IPR045143">
    <property type="entry name" value="Spc25"/>
</dbReference>
<dbReference type="InterPro" id="IPR013255">
    <property type="entry name" value="Spc25_C"/>
</dbReference>
<dbReference type="PANTHER" id="PTHR14281:SF0">
    <property type="entry name" value="KINETOCHORE PROTEIN SPC25"/>
    <property type="match status" value="1"/>
</dbReference>
<dbReference type="PANTHER" id="PTHR14281">
    <property type="entry name" value="KINETOCHORE PROTEIN SPC25-RELATED"/>
    <property type="match status" value="1"/>
</dbReference>
<dbReference type="Pfam" id="PF08234">
    <property type="entry name" value="Spindle_Spc25"/>
    <property type="match status" value="1"/>
</dbReference>
<comment type="function">
    <text evidence="6">Acts as a component of the essential kinetochore-associated NDC80 complex, which is required for chromosome segregation and spindle checkpoint activity to ensure proper cell division.</text>
</comment>
<comment type="subunit">
    <text evidence="3">Component of the NDC80 complex, which consists of NDC80, NUF2, SPC24 and SPC25.</text>
</comment>
<comment type="subcellular location">
    <subcellularLocation>
        <location evidence="3">Chromosome</location>
        <location evidence="3">Centromere</location>
    </subcellularLocation>
</comment>
<comment type="similarity">
    <text evidence="5">Belongs to the SPC25 family.</text>
</comment>
<comment type="sequence caution" evidence="5">
    <conflict type="erroneous initiation">
        <sequence resource="EMBL-CDS" id="AAM65290"/>
    </conflict>
    <text>Truncated N-terminus.</text>
</comment>
<comment type="sequence caution" evidence="5">
    <conflict type="erroneous gene model prediction">
        <sequence resource="EMBL-CDS" id="CAB51068"/>
    </conflict>
</comment>
<reference key="1">
    <citation type="journal article" date="2000" name="Nature">
        <title>Sequence and analysis of chromosome 3 of the plant Arabidopsis thaliana.</title>
        <authorList>
            <person name="Salanoubat M."/>
            <person name="Lemcke K."/>
            <person name="Rieger M."/>
            <person name="Ansorge W."/>
            <person name="Unseld M."/>
            <person name="Fartmann B."/>
            <person name="Valle G."/>
            <person name="Bloecker H."/>
            <person name="Perez-Alonso M."/>
            <person name="Obermaier B."/>
            <person name="Delseny M."/>
            <person name="Boutry M."/>
            <person name="Grivell L.A."/>
            <person name="Mache R."/>
            <person name="Puigdomenech P."/>
            <person name="De Simone V."/>
            <person name="Choisne N."/>
            <person name="Artiguenave F."/>
            <person name="Robert C."/>
            <person name="Brottier P."/>
            <person name="Wincker P."/>
            <person name="Cattolico L."/>
            <person name="Weissenbach J."/>
            <person name="Saurin W."/>
            <person name="Quetier F."/>
            <person name="Schaefer M."/>
            <person name="Mueller-Auer S."/>
            <person name="Gabel C."/>
            <person name="Fuchs M."/>
            <person name="Benes V."/>
            <person name="Wurmbach E."/>
            <person name="Drzonek H."/>
            <person name="Erfle H."/>
            <person name="Jordan N."/>
            <person name="Bangert S."/>
            <person name="Wiedelmann R."/>
            <person name="Kranz H."/>
            <person name="Voss H."/>
            <person name="Holland R."/>
            <person name="Brandt P."/>
            <person name="Nyakatura G."/>
            <person name="Vezzi A."/>
            <person name="D'Angelo M."/>
            <person name="Pallavicini A."/>
            <person name="Toppo S."/>
            <person name="Simionati B."/>
            <person name="Conrad A."/>
            <person name="Hornischer K."/>
            <person name="Kauer G."/>
            <person name="Loehnert T.-H."/>
            <person name="Nordsiek G."/>
            <person name="Reichelt J."/>
            <person name="Scharfe M."/>
            <person name="Schoen O."/>
            <person name="Bargues M."/>
            <person name="Terol J."/>
            <person name="Climent J."/>
            <person name="Navarro P."/>
            <person name="Collado C."/>
            <person name="Perez-Perez A."/>
            <person name="Ottenwaelder B."/>
            <person name="Duchemin D."/>
            <person name="Cooke R."/>
            <person name="Laudie M."/>
            <person name="Berger-Llauro C."/>
            <person name="Purnelle B."/>
            <person name="Masuy D."/>
            <person name="de Haan M."/>
            <person name="Maarse A.C."/>
            <person name="Alcaraz J.-P."/>
            <person name="Cottet A."/>
            <person name="Casacuberta E."/>
            <person name="Monfort A."/>
            <person name="Argiriou A."/>
            <person name="Flores M."/>
            <person name="Liguori R."/>
            <person name="Vitale D."/>
            <person name="Mannhaupt G."/>
            <person name="Haase D."/>
            <person name="Schoof H."/>
            <person name="Rudd S."/>
            <person name="Zaccaria P."/>
            <person name="Mewes H.-W."/>
            <person name="Mayer K.F.X."/>
            <person name="Kaul S."/>
            <person name="Town C.D."/>
            <person name="Koo H.L."/>
            <person name="Tallon L.J."/>
            <person name="Jenkins J."/>
            <person name="Rooney T."/>
            <person name="Rizzo M."/>
            <person name="Walts A."/>
            <person name="Utterback T."/>
            <person name="Fujii C.Y."/>
            <person name="Shea T.P."/>
            <person name="Creasy T.H."/>
            <person name="Haas B."/>
            <person name="Maiti R."/>
            <person name="Wu D."/>
            <person name="Peterson J."/>
            <person name="Van Aken S."/>
            <person name="Pai G."/>
            <person name="Militscher J."/>
            <person name="Sellers P."/>
            <person name="Gill J.E."/>
            <person name="Feldblyum T.V."/>
            <person name="Preuss D."/>
            <person name="Lin X."/>
            <person name="Nierman W.C."/>
            <person name="Salzberg S.L."/>
            <person name="White O."/>
            <person name="Venter J.C."/>
            <person name="Fraser C.M."/>
            <person name="Kaneko T."/>
            <person name="Nakamura Y."/>
            <person name="Sato S."/>
            <person name="Kato T."/>
            <person name="Asamizu E."/>
            <person name="Sasamoto S."/>
            <person name="Kimura T."/>
            <person name="Idesawa K."/>
            <person name="Kawashima K."/>
            <person name="Kishida Y."/>
            <person name="Kiyokawa C."/>
            <person name="Kohara M."/>
            <person name="Matsumoto M."/>
            <person name="Matsuno A."/>
            <person name="Muraki A."/>
            <person name="Nakayama S."/>
            <person name="Nakazaki N."/>
            <person name="Shinpo S."/>
            <person name="Takeuchi C."/>
            <person name="Wada T."/>
            <person name="Watanabe A."/>
            <person name="Yamada M."/>
            <person name="Yasuda M."/>
            <person name="Tabata S."/>
        </authorList>
    </citation>
    <scope>NUCLEOTIDE SEQUENCE [LARGE SCALE GENOMIC DNA]</scope>
    <source>
        <strain>cv. Columbia</strain>
    </source>
</reference>
<reference key="2">
    <citation type="journal article" date="2017" name="Plant J.">
        <title>Araport11: a complete reannotation of the Arabidopsis thaliana reference genome.</title>
        <authorList>
            <person name="Cheng C.Y."/>
            <person name="Krishnakumar V."/>
            <person name="Chan A.P."/>
            <person name="Thibaud-Nissen F."/>
            <person name="Schobel S."/>
            <person name="Town C.D."/>
        </authorList>
    </citation>
    <scope>GENOME REANNOTATION</scope>
    <source>
        <strain>cv. Columbia</strain>
    </source>
</reference>
<reference key="3">
    <citation type="journal article" date="2003" name="Science">
        <title>Empirical analysis of transcriptional activity in the Arabidopsis genome.</title>
        <authorList>
            <person name="Yamada K."/>
            <person name="Lim J."/>
            <person name="Dale J.M."/>
            <person name="Chen H."/>
            <person name="Shinn P."/>
            <person name="Palm C.J."/>
            <person name="Southwick A.M."/>
            <person name="Wu H.C."/>
            <person name="Kim C.J."/>
            <person name="Nguyen M."/>
            <person name="Pham P.K."/>
            <person name="Cheuk R.F."/>
            <person name="Karlin-Newmann G."/>
            <person name="Liu S.X."/>
            <person name="Lam B."/>
            <person name="Sakano H."/>
            <person name="Wu T."/>
            <person name="Yu G."/>
            <person name="Miranda M."/>
            <person name="Quach H.L."/>
            <person name="Tripp M."/>
            <person name="Chang C.H."/>
            <person name="Lee J.M."/>
            <person name="Toriumi M.J."/>
            <person name="Chan M.M."/>
            <person name="Tang C.C."/>
            <person name="Onodera C.S."/>
            <person name="Deng J.M."/>
            <person name="Akiyama K."/>
            <person name="Ansari Y."/>
            <person name="Arakawa T."/>
            <person name="Banh J."/>
            <person name="Banno F."/>
            <person name="Bowser L."/>
            <person name="Brooks S.Y."/>
            <person name="Carninci P."/>
            <person name="Chao Q."/>
            <person name="Choy N."/>
            <person name="Enju A."/>
            <person name="Goldsmith A.D."/>
            <person name="Gurjal M."/>
            <person name="Hansen N.F."/>
            <person name="Hayashizaki Y."/>
            <person name="Johnson-Hopson C."/>
            <person name="Hsuan V.W."/>
            <person name="Iida K."/>
            <person name="Karnes M."/>
            <person name="Khan S."/>
            <person name="Koesema E."/>
            <person name="Ishida J."/>
            <person name="Jiang P.X."/>
            <person name="Jones T."/>
            <person name="Kawai J."/>
            <person name="Kamiya A."/>
            <person name="Meyers C."/>
            <person name="Nakajima M."/>
            <person name="Narusaka M."/>
            <person name="Seki M."/>
            <person name="Sakurai T."/>
            <person name="Satou M."/>
            <person name="Tamse R."/>
            <person name="Vaysberg M."/>
            <person name="Wallender E.K."/>
            <person name="Wong C."/>
            <person name="Yamamura Y."/>
            <person name="Yuan S."/>
            <person name="Shinozaki K."/>
            <person name="Davis R.W."/>
            <person name="Theologis A."/>
            <person name="Ecker J.R."/>
        </authorList>
    </citation>
    <scope>NUCLEOTIDE SEQUENCE [LARGE SCALE MRNA]</scope>
    <source>
        <strain>cv. Columbia</strain>
    </source>
</reference>
<reference key="4">
    <citation type="submission" date="2002-03" db="EMBL/GenBank/DDBJ databases">
        <title>Full-length cDNA from Arabidopsis thaliana.</title>
        <authorList>
            <person name="Brover V.V."/>
            <person name="Troukhan M.E."/>
            <person name="Alexandrov N.A."/>
            <person name="Lu Y.-P."/>
            <person name="Flavell R.B."/>
            <person name="Feldmann K.A."/>
        </authorList>
    </citation>
    <scope>NUCLEOTIDE SEQUENCE [LARGE SCALE MRNA]</scope>
</reference>
<reference key="5">
    <citation type="journal article" date="2012" name="Mol. Cell. Proteomics">
        <title>Comparative large-scale characterisation of plant vs. mammal proteins reveals similar and idiosyncratic N-alpha acetylation features.</title>
        <authorList>
            <person name="Bienvenut W.V."/>
            <person name="Sumpton D."/>
            <person name="Martinez A."/>
            <person name="Lilla S."/>
            <person name="Espagne C."/>
            <person name="Meinnel T."/>
            <person name="Giglione C."/>
        </authorList>
    </citation>
    <scope>ACETYLATION [LARGE SCALE ANALYSIS] AT MET-1</scope>
    <scope>IDENTIFICATION BY MASS SPECTROMETRY [LARGE SCALE ANALYSIS]</scope>
</reference>
<reference key="6">
    <citation type="journal article" date="2018" name="Plant J.">
        <title>MUN (MERISTEM UNSTRUCTURED), encoding a SPC24 homolog of NDC80 kinetochore complex, affects development through cell division in Arabidopsis thaliana.</title>
        <authorList>
            <person name="Shin J."/>
            <person name="Jeong G."/>
            <person name="Park J.Y."/>
            <person name="Kim H."/>
            <person name="Lee I."/>
        </authorList>
    </citation>
    <scope>FUNCTION</scope>
    <scope>SUBUNIT</scope>
    <scope>SUBCELLULAR LOCATION</scope>
</reference>
<feature type="chain" id="PRO_0000444104" description="Kinetochore protein SPC25 homolog">
    <location>
        <begin position="1"/>
        <end position="315"/>
    </location>
</feature>
<feature type="region of interest" description="Disordered" evidence="2">
    <location>
        <begin position="261"/>
        <end position="315"/>
    </location>
</feature>
<feature type="coiled-coil region" evidence="1">
    <location>
        <begin position="57"/>
        <end position="91"/>
    </location>
</feature>
<feature type="compositionally biased region" description="Polar residues" evidence="2">
    <location>
        <begin position="266"/>
        <end position="275"/>
    </location>
</feature>
<feature type="compositionally biased region" description="Basic residues" evidence="2">
    <location>
        <begin position="280"/>
        <end position="289"/>
    </location>
</feature>
<feature type="modified residue" description="N-acetylmethionine" evidence="9">
    <location>
        <position position="1"/>
    </location>
</feature>
<feature type="sequence conflict" description="In Ref. 4; AAM65290." evidence="5" ref="4">
    <original>R</original>
    <variation>C</variation>
    <location>
        <position position="87"/>
    </location>
</feature>
<feature type="sequence conflict" description="In Ref. 4; AAM65290." evidence="5" ref="4">
    <original>K</original>
    <variation>T</variation>
    <location>
        <position position="136"/>
    </location>
</feature>
<name>SPC25_ARATH</name>
<sequence>MEQISNIAGGDTTKETMASLGLICEKDIHEQRLKIDSFIASPFRRSMNSLVERAQATAQSQVELMNLKADLREAEDELVKVLAVKTRKEARQMGIRDSISATQSRIEVLRRNLQLQKSKKDDSVRIISQQLQALSKSKDNAGKVTEDKADIHEAISWYNHALGFHVEAGHGVKFTFTNIDAKRPTREFSFTVHYGNDIYTLLDSDLQLDYINEMVQELNKTNDLFRFVRLMREQFLKSTLSELPTHSGQLQQETSAISASAPAISFSTDTNMSTPENKRSKVQVNRRQKRGSESPLLAPVSTSATRRSSRFKGKK</sequence>
<gene>
    <name evidence="4" type="primary">SPC25</name>
    <name evidence="7" type="ordered locus">At3g48210</name>
    <name evidence="8" type="ORF">T24C20_90</name>
</gene>
<protein>
    <recommendedName>
        <fullName evidence="4">Kinetochore protein SPC25 homolog</fullName>
    </recommendedName>
</protein>
<evidence type="ECO:0000255" key="1"/>
<evidence type="ECO:0000256" key="2">
    <source>
        <dbReference type="SAM" id="MobiDB-lite"/>
    </source>
</evidence>
<evidence type="ECO:0000269" key="3">
    <source>
    </source>
</evidence>
<evidence type="ECO:0000303" key="4">
    <source>
    </source>
</evidence>
<evidence type="ECO:0000305" key="5"/>
<evidence type="ECO:0000305" key="6">
    <source>
    </source>
</evidence>
<evidence type="ECO:0000312" key="7">
    <source>
        <dbReference type="Araport" id="AT3G48210"/>
    </source>
</evidence>
<evidence type="ECO:0000312" key="8">
    <source>
        <dbReference type="EMBL" id="CAB51068.1"/>
    </source>
</evidence>
<evidence type="ECO:0007744" key="9">
    <source>
    </source>
</evidence>
<proteinExistence type="evidence at protein level"/>
<keyword id="KW-0007">Acetylation</keyword>
<keyword id="KW-0131">Cell cycle</keyword>
<keyword id="KW-0132">Cell division</keyword>
<keyword id="KW-0137">Centromere</keyword>
<keyword id="KW-0158">Chromosome</keyword>
<keyword id="KW-0175">Coiled coil</keyword>
<keyword id="KW-0498">Mitosis</keyword>
<keyword id="KW-1185">Reference proteome</keyword>